<evidence type="ECO:0000255" key="1">
    <source>
        <dbReference type="HAMAP-Rule" id="MF_01194"/>
    </source>
</evidence>
<evidence type="ECO:0000256" key="2">
    <source>
        <dbReference type="SAM" id="MobiDB-lite"/>
    </source>
</evidence>
<keyword id="KW-0963">Cytoplasm</keyword>
<keyword id="KW-0346">Stress response</keyword>
<dbReference type="EMBL" id="CU928162">
    <property type="protein sequence ID" value="CAR07191.1"/>
    <property type="molecule type" value="Genomic_DNA"/>
</dbReference>
<dbReference type="RefSeq" id="WP_001295356.1">
    <property type="nucleotide sequence ID" value="NC_011745.1"/>
</dbReference>
<dbReference type="SMR" id="B7MS77"/>
<dbReference type="GeneID" id="93776448"/>
<dbReference type="KEGG" id="ecq:ECED1_0989"/>
<dbReference type="HOGENOM" id="CLU_123865_1_0_6"/>
<dbReference type="Proteomes" id="UP000000748">
    <property type="component" value="Chromosome"/>
</dbReference>
<dbReference type="GO" id="GO:0005737">
    <property type="term" value="C:cytoplasm"/>
    <property type="evidence" value="ECO:0007669"/>
    <property type="project" value="UniProtKB-SubCell"/>
</dbReference>
<dbReference type="GO" id="GO:0003677">
    <property type="term" value="F:DNA binding"/>
    <property type="evidence" value="ECO:0007669"/>
    <property type="project" value="InterPro"/>
</dbReference>
<dbReference type="GO" id="GO:0009408">
    <property type="term" value="P:response to heat"/>
    <property type="evidence" value="ECO:0007669"/>
    <property type="project" value="UniProtKB-UniRule"/>
</dbReference>
<dbReference type="Gene3D" id="2.30.30.390">
    <property type="entry name" value="Hemimethylated DNA-binding domain"/>
    <property type="match status" value="1"/>
</dbReference>
<dbReference type="HAMAP" id="MF_01194">
    <property type="entry name" value="HspQ"/>
    <property type="match status" value="1"/>
</dbReference>
<dbReference type="InterPro" id="IPR011722">
    <property type="entry name" value="Hemimethylated_DNA-bd_dom"/>
</dbReference>
<dbReference type="InterPro" id="IPR036623">
    <property type="entry name" value="Hemimethylated_DNA-bd_sf"/>
</dbReference>
<dbReference type="InterPro" id="IPR022866">
    <property type="entry name" value="HspQ"/>
</dbReference>
<dbReference type="NCBIfam" id="NF010729">
    <property type="entry name" value="PRK14129.1"/>
    <property type="match status" value="1"/>
</dbReference>
<dbReference type="NCBIfam" id="TIGR02097">
    <property type="entry name" value="yccV"/>
    <property type="match status" value="1"/>
</dbReference>
<dbReference type="Pfam" id="PF08755">
    <property type="entry name" value="YccV-like"/>
    <property type="match status" value="1"/>
</dbReference>
<dbReference type="SMART" id="SM00992">
    <property type="entry name" value="YccV-like"/>
    <property type="match status" value="1"/>
</dbReference>
<dbReference type="SUPFAM" id="SSF141255">
    <property type="entry name" value="YccV-like"/>
    <property type="match status" value="1"/>
</dbReference>
<reference key="1">
    <citation type="journal article" date="2009" name="PLoS Genet.">
        <title>Organised genome dynamics in the Escherichia coli species results in highly diverse adaptive paths.</title>
        <authorList>
            <person name="Touchon M."/>
            <person name="Hoede C."/>
            <person name="Tenaillon O."/>
            <person name="Barbe V."/>
            <person name="Baeriswyl S."/>
            <person name="Bidet P."/>
            <person name="Bingen E."/>
            <person name="Bonacorsi S."/>
            <person name="Bouchier C."/>
            <person name="Bouvet O."/>
            <person name="Calteau A."/>
            <person name="Chiapello H."/>
            <person name="Clermont O."/>
            <person name="Cruveiller S."/>
            <person name="Danchin A."/>
            <person name="Diard M."/>
            <person name="Dossat C."/>
            <person name="Karoui M.E."/>
            <person name="Frapy E."/>
            <person name="Garry L."/>
            <person name="Ghigo J.M."/>
            <person name="Gilles A.M."/>
            <person name="Johnson J."/>
            <person name="Le Bouguenec C."/>
            <person name="Lescat M."/>
            <person name="Mangenot S."/>
            <person name="Martinez-Jehanne V."/>
            <person name="Matic I."/>
            <person name="Nassif X."/>
            <person name="Oztas S."/>
            <person name="Petit M.A."/>
            <person name="Pichon C."/>
            <person name="Rouy Z."/>
            <person name="Ruf C.S."/>
            <person name="Schneider D."/>
            <person name="Tourret J."/>
            <person name="Vacherie B."/>
            <person name="Vallenet D."/>
            <person name="Medigue C."/>
            <person name="Rocha E.P.C."/>
            <person name="Denamur E."/>
        </authorList>
    </citation>
    <scope>NUCLEOTIDE SEQUENCE [LARGE SCALE GENOMIC DNA]</scope>
    <source>
        <strain>ED1a</strain>
    </source>
</reference>
<organism>
    <name type="scientific">Escherichia coli O81 (strain ED1a)</name>
    <dbReference type="NCBI Taxonomy" id="585397"/>
    <lineage>
        <taxon>Bacteria</taxon>
        <taxon>Pseudomonadati</taxon>
        <taxon>Pseudomonadota</taxon>
        <taxon>Gammaproteobacteria</taxon>
        <taxon>Enterobacterales</taxon>
        <taxon>Enterobacteriaceae</taxon>
        <taxon>Escherichia</taxon>
    </lineage>
</organism>
<sequence>MIASKFGIGQQVRHSLLGYLGVVVDIDPVYSLSEPSPDELAVNDELRAAPWYHVVMEDDNGLPVHTYLAEAQLSSELQDEHPEQPSMDELAQTIRKQLQAPRLRN</sequence>
<accession>B7MS77</accession>
<gene>
    <name evidence="1" type="primary">hspQ</name>
    <name type="ordered locus">ECED1_0989</name>
</gene>
<feature type="chain" id="PRO_1000164511" description="Heat shock protein HspQ">
    <location>
        <begin position="1"/>
        <end position="105"/>
    </location>
</feature>
<feature type="region of interest" description="Disordered" evidence="2">
    <location>
        <begin position="75"/>
        <end position="105"/>
    </location>
</feature>
<name>HSPQ_ECO81</name>
<proteinExistence type="inferred from homology"/>
<comment type="function">
    <text evidence="1">Involved in the degradation of certain denaturated proteins, including DnaA, during heat shock stress.</text>
</comment>
<comment type="subcellular location">
    <subcellularLocation>
        <location evidence="1">Cytoplasm</location>
    </subcellularLocation>
</comment>
<comment type="similarity">
    <text evidence="1">Belongs to the HspQ family.</text>
</comment>
<protein>
    <recommendedName>
        <fullName evidence="1">Heat shock protein HspQ</fullName>
    </recommendedName>
</protein>